<dbReference type="EC" id="2.7.13.3"/>
<dbReference type="EMBL" id="CP000911">
    <property type="protein sequence ID" value="ABY38688.1"/>
    <property type="molecule type" value="Genomic_DNA"/>
</dbReference>
<dbReference type="RefSeq" id="WP_006198818.1">
    <property type="nucleotide sequence ID" value="NC_010169.1"/>
</dbReference>
<dbReference type="SMR" id="B0CI82"/>
<dbReference type="KEGG" id="bmt:BSUIS_A1662"/>
<dbReference type="HOGENOM" id="CLU_000445_23_0_5"/>
<dbReference type="Proteomes" id="UP000008545">
    <property type="component" value="Chromosome I"/>
</dbReference>
<dbReference type="GO" id="GO:0005737">
    <property type="term" value="C:cytoplasm"/>
    <property type="evidence" value="ECO:0007669"/>
    <property type="project" value="UniProtKB-SubCell"/>
</dbReference>
<dbReference type="GO" id="GO:0005886">
    <property type="term" value="C:plasma membrane"/>
    <property type="evidence" value="ECO:0007669"/>
    <property type="project" value="TreeGrafter"/>
</dbReference>
<dbReference type="GO" id="GO:0005524">
    <property type="term" value="F:ATP binding"/>
    <property type="evidence" value="ECO:0007669"/>
    <property type="project" value="UniProtKB-KW"/>
</dbReference>
<dbReference type="GO" id="GO:0009927">
    <property type="term" value="F:histidine phosphotransfer kinase activity"/>
    <property type="evidence" value="ECO:0007669"/>
    <property type="project" value="TreeGrafter"/>
</dbReference>
<dbReference type="GO" id="GO:0000155">
    <property type="term" value="F:phosphorelay sensor kinase activity"/>
    <property type="evidence" value="ECO:0007669"/>
    <property type="project" value="InterPro"/>
</dbReference>
<dbReference type="GO" id="GO:0051301">
    <property type="term" value="P:cell division"/>
    <property type="evidence" value="ECO:0007669"/>
    <property type="project" value="UniProtKB-KW"/>
</dbReference>
<dbReference type="GO" id="GO:0006355">
    <property type="term" value="P:regulation of DNA-templated transcription"/>
    <property type="evidence" value="ECO:0007669"/>
    <property type="project" value="InterPro"/>
</dbReference>
<dbReference type="CDD" id="cd00082">
    <property type="entry name" value="HisKA"/>
    <property type="match status" value="1"/>
</dbReference>
<dbReference type="CDD" id="cd00130">
    <property type="entry name" value="PAS"/>
    <property type="match status" value="1"/>
</dbReference>
<dbReference type="Gene3D" id="1.10.287.130">
    <property type="match status" value="1"/>
</dbReference>
<dbReference type="Gene3D" id="3.30.565.10">
    <property type="entry name" value="Histidine kinase-like ATPase, C-terminal domain"/>
    <property type="match status" value="1"/>
</dbReference>
<dbReference type="Gene3D" id="3.30.450.20">
    <property type="entry name" value="PAS domain"/>
    <property type="match status" value="1"/>
</dbReference>
<dbReference type="InterPro" id="IPR036890">
    <property type="entry name" value="HATPase_C_sf"/>
</dbReference>
<dbReference type="InterPro" id="IPR005467">
    <property type="entry name" value="His_kinase_dom"/>
</dbReference>
<dbReference type="InterPro" id="IPR003661">
    <property type="entry name" value="HisK_dim/P_dom"/>
</dbReference>
<dbReference type="InterPro" id="IPR036097">
    <property type="entry name" value="HisK_dim/P_sf"/>
</dbReference>
<dbReference type="InterPro" id="IPR000014">
    <property type="entry name" value="PAS"/>
</dbReference>
<dbReference type="InterPro" id="IPR035965">
    <property type="entry name" value="PAS-like_dom_sf"/>
</dbReference>
<dbReference type="InterPro" id="IPR013767">
    <property type="entry name" value="PAS_fold"/>
</dbReference>
<dbReference type="InterPro" id="IPR048231">
    <property type="entry name" value="PdhS_histid_kinase"/>
</dbReference>
<dbReference type="InterPro" id="IPR004358">
    <property type="entry name" value="Sig_transdc_His_kin-like_C"/>
</dbReference>
<dbReference type="NCBIfam" id="NF041593">
    <property type="entry name" value="histid_kinase_PdhS"/>
    <property type="match status" value="1"/>
</dbReference>
<dbReference type="NCBIfam" id="TIGR00229">
    <property type="entry name" value="sensory_box"/>
    <property type="match status" value="1"/>
</dbReference>
<dbReference type="PANTHER" id="PTHR43047:SF72">
    <property type="entry name" value="OSMOSENSING HISTIDINE PROTEIN KINASE SLN1"/>
    <property type="match status" value="1"/>
</dbReference>
<dbReference type="PANTHER" id="PTHR43047">
    <property type="entry name" value="TWO-COMPONENT HISTIDINE PROTEIN KINASE"/>
    <property type="match status" value="1"/>
</dbReference>
<dbReference type="Pfam" id="PF02518">
    <property type="entry name" value="HATPase_c"/>
    <property type="match status" value="1"/>
</dbReference>
<dbReference type="Pfam" id="PF00512">
    <property type="entry name" value="HisKA"/>
    <property type="match status" value="1"/>
</dbReference>
<dbReference type="Pfam" id="PF00989">
    <property type="entry name" value="PAS"/>
    <property type="match status" value="1"/>
</dbReference>
<dbReference type="Pfam" id="PF13188">
    <property type="entry name" value="PAS_8"/>
    <property type="match status" value="1"/>
</dbReference>
<dbReference type="PRINTS" id="PR00344">
    <property type="entry name" value="BCTRLSENSOR"/>
</dbReference>
<dbReference type="SMART" id="SM00387">
    <property type="entry name" value="HATPase_c"/>
    <property type="match status" value="1"/>
</dbReference>
<dbReference type="SMART" id="SM00388">
    <property type="entry name" value="HisKA"/>
    <property type="match status" value="1"/>
</dbReference>
<dbReference type="SMART" id="SM00091">
    <property type="entry name" value="PAS"/>
    <property type="match status" value="2"/>
</dbReference>
<dbReference type="SUPFAM" id="SSF55874">
    <property type="entry name" value="ATPase domain of HSP90 chaperone/DNA topoisomerase II/histidine kinase"/>
    <property type="match status" value="1"/>
</dbReference>
<dbReference type="SUPFAM" id="SSF47384">
    <property type="entry name" value="Homodimeric domain of signal transducing histidine kinase"/>
    <property type="match status" value="1"/>
</dbReference>
<dbReference type="SUPFAM" id="SSF55785">
    <property type="entry name" value="PYP-like sensor domain (PAS domain)"/>
    <property type="match status" value="2"/>
</dbReference>
<dbReference type="PROSITE" id="PS50109">
    <property type="entry name" value="HIS_KIN"/>
    <property type="match status" value="1"/>
</dbReference>
<dbReference type="PROSITE" id="PS50112">
    <property type="entry name" value="PAS"/>
    <property type="match status" value="1"/>
</dbReference>
<accession>B0CI82</accession>
<name>PDHS_BRUSI</name>
<sequence>MSGSYPFIDIAALDSVREGFARGDAQLVLAHDLSTVLWVNGPGAKLFGYNRVEDLIEGQLDLPVATRRQIAAFSSENTSAPSAVAVRLGGGLRSELTHLHVSNIKLPDGVAALLVATQMPDNSAEAAISGLGDDSTHIALVDTVGKVVAASPRFALLDISASTLEDLIVEAGDATDRIVKRRIRTGSHSVPGAIARLTDTPALHLLCIVGDAPAQFQTAAEAVPLPDNAEAVLEEILPEQGDAPAQQAQKTHAEQPRPKTFAFDHDAPPARFIWKVGPDGTFSEISPDLAAVVGPNSADIVGRRFSDVANVFGFYTDGSIAALLLERDTWSGKRLLWPVEGTRLRVPVELAALPVYSRDREFLGFRGFGIVRPAEAEADPEEIGLALAGGIPQNRKPRKEPAETARMVGEDDVLALSEEVANDDQPAAVLPKPPLDITPTPGRRDSDKVISLLNSCAQEKVAADQAKFLKEKERATRPEGGLTKTERNAFREIAERLRKQGLANTRAESETPVSETSSIEPVEPTPPVKTRSEPIQPDETALLANLPVPVIIHSGDAIHYVNQALLDITGYESLDDIRSAGGVDVLFNSESDDGETRQSMVLRHADGSEEPVDTHLNAIAWRGGRALMLSLMPVTAADLPAPAELPAANDEEKQALEAHVEELKTILDTATDGVVLIDPEGRIRSMNHSASALFGYERDEAEGKFFSMLFAIESQRAAMDYLHGLSGNGVLSVLNDGREVIGREAKGGFIPLFMTIGKLPHTRGFCAVLRDITQWKRTEEELTNARKEAERASNQKTEFLARISHEIRTPLNAIIGFSELMADEKFGPIGNDRYRDYLRDINRSGNHVLALVNDLLDISKIEAGALDMQFEAVSLNDAIGEAIALMQPQANRERVIIRSSFQSNLPDIVADSRSIKQVALNLLSNAVRFTAPGGQVIVSTSYELNGDVVMRVRDTGIGMSKSEVEQALKPFRQINALEGRKAESAKDWRNEGTGLGLPLTKAMVEANRAQFAIDSNPGQGTVVEIVFPPTRVLAD</sequence>
<reference key="1">
    <citation type="submission" date="2007-12" db="EMBL/GenBank/DDBJ databases">
        <title>Brucella suis ATCC 23445 whole genome shotgun sequencing project.</title>
        <authorList>
            <person name="Setubal J.C."/>
            <person name="Bowns C."/>
            <person name="Boyle S."/>
            <person name="Crasta O.R."/>
            <person name="Czar M.J."/>
            <person name="Dharmanolla C."/>
            <person name="Gillespie J.J."/>
            <person name="Kenyon R.W."/>
            <person name="Lu J."/>
            <person name="Mane S."/>
            <person name="Mohapatra S."/>
            <person name="Nagrani S."/>
            <person name="Purkayastha A."/>
            <person name="Rajasimha H.K."/>
            <person name="Shallom J.M."/>
            <person name="Shallom S."/>
            <person name="Shukla M."/>
            <person name="Snyder E.E."/>
            <person name="Sobral B.W."/>
            <person name="Wattam A.R."/>
            <person name="Will R."/>
            <person name="Williams K."/>
            <person name="Yoo H."/>
            <person name="Bruce D."/>
            <person name="Detter C."/>
            <person name="Munk C."/>
            <person name="Brettin T.S."/>
        </authorList>
    </citation>
    <scope>NUCLEOTIDE SEQUENCE [LARGE SCALE GENOMIC DNA]</scope>
    <source>
        <strain>ATCC 23445 / NCTC 10510</strain>
    </source>
</reference>
<protein>
    <recommendedName>
        <fullName>Cell-division control histidine kinase PdhS</fullName>
        <ecNumber>2.7.13.3</ecNumber>
    </recommendedName>
</protein>
<comment type="function">
    <text evidence="1">Functions as a polar differentiation marker. Essential protein that, by localizing in the old pole of dividing cells, controls cell division and maturation, probably through control of DivK phosphorylation status and cellular distribution, which in turn regulates CtrA, a transcriptional regulator of the minB operon. The asymmetrical localization of this protein is probably required for cells to enter a new division cycle (By similarity).</text>
</comment>
<comment type="catalytic activity">
    <reaction>
        <text>ATP + protein L-histidine = ADP + protein N-phospho-L-histidine.</text>
        <dbReference type="EC" id="2.7.13.3"/>
    </reaction>
</comment>
<comment type="subunit">
    <text evidence="1">Interacts with DivK.</text>
</comment>
<comment type="subcellular location">
    <subcellularLocation>
        <location evidence="1">Cytoplasm</location>
    </subcellularLocation>
    <text evidence="1">Localizes at the old pole of dividing cells. Colocalizes with DivK (By similarity).</text>
</comment>
<gene>
    <name type="primary">pdhS</name>
    <name type="ordered locus">BSUIS_A1662</name>
</gene>
<feature type="chain" id="PRO_0000361905" description="Cell-division control histidine kinase PdhS">
    <location>
        <begin position="1"/>
        <end position="1035"/>
    </location>
</feature>
<feature type="domain" description="PAS" evidence="3">
    <location>
        <begin position="659"/>
        <end position="730"/>
    </location>
</feature>
<feature type="domain" description="Histidine kinase" evidence="2">
    <location>
        <begin position="802"/>
        <end position="1031"/>
    </location>
</feature>
<feature type="region of interest" description="Important for polar localization" evidence="1">
    <location>
        <begin position="1"/>
        <end position="613"/>
    </location>
</feature>
<feature type="region of interest" description="Disordered" evidence="4">
    <location>
        <begin position="500"/>
        <end position="533"/>
    </location>
</feature>
<feature type="region of interest" description="Interaction with DivK" evidence="1">
    <location>
        <begin position="614"/>
        <end position="1035"/>
    </location>
</feature>
<feature type="modified residue" description="Phosphohistidine; by autocatalysis" evidence="2">
    <location>
        <position position="805"/>
    </location>
</feature>
<keyword id="KW-0067">ATP-binding</keyword>
<keyword id="KW-0131">Cell cycle</keyword>
<keyword id="KW-0132">Cell division</keyword>
<keyword id="KW-0963">Cytoplasm</keyword>
<keyword id="KW-0418">Kinase</keyword>
<keyword id="KW-0547">Nucleotide-binding</keyword>
<keyword id="KW-0597">Phosphoprotein</keyword>
<keyword id="KW-0808">Transferase</keyword>
<proteinExistence type="inferred from homology"/>
<organism>
    <name type="scientific">Brucella suis (strain ATCC 23445 / NCTC 10510)</name>
    <dbReference type="NCBI Taxonomy" id="470137"/>
    <lineage>
        <taxon>Bacteria</taxon>
        <taxon>Pseudomonadati</taxon>
        <taxon>Pseudomonadota</taxon>
        <taxon>Alphaproteobacteria</taxon>
        <taxon>Hyphomicrobiales</taxon>
        <taxon>Brucellaceae</taxon>
        <taxon>Brucella/Ochrobactrum group</taxon>
        <taxon>Brucella</taxon>
    </lineage>
</organism>
<evidence type="ECO:0000250" key="1"/>
<evidence type="ECO:0000255" key="2">
    <source>
        <dbReference type="PROSITE-ProRule" id="PRU00107"/>
    </source>
</evidence>
<evidence type="ECO:0000255" key="3">
    <source>
        <dbReference type="PROSITE-ProRule" id="PRU00140"/>
    </source>
</evidence>
<evidence type="ECO:0000256" key="4">
    <source>
        <dbReference type="SAM" id="MobiDB-lite"/>
    </source>
</evidence>